<gene>
    <name evidence="1" type="primary">rimM</name>
    <name type="ordered locus">YPA_2850</name>
</gene>
<protein>
    <recommendedName>
        <fullName evidence="1">Ribosome maturation factor RimM</fullName>
    </recommendedName>
</protein>
<proteinExistence type="inferred from homology"/>
<organism>
    <name type="scientific">Yersinia pestis bv. Antiqua (strain Antiqua)</name>
    <dbReference type="NCBI Taxonomy" id="360102"/>
    <lineage>
        <taxon>Bacteria</taxon>
        <taxon>Pseudomonadati</taxon>
        <taxon>Pseudomonadota</taxon>
        <taxon>Gammaproteobacteria</taxon>
        <taxon>Enterobacterales</taxon>
        <taxon>Yersiniaceae</taxon>
        <taxon>Yersinia</taxon>
    </lineage>
</organism>
<evidence type="ECO:0000255" key="1">
    <source>
        <dbReference type="HAMAP-Rule" id="MF_00014"/>
    </source>
</evidence>
<keyword id="KW-0143">Chaperone</keyword>
<keyword id="KW-0963">Cytoplasm</keyword>
<keyword id="KW-0690">Ribosome biogenesis</keyword>
<keyword id="KW-0698">rRNA processing</keyword>
<feature type="chain" id="PRO_1000001247" description="Ribosome maturation factor RimM">
    <location>
        <begin position="1"/>
        <end position="182"/>
    </location>
</feature>
<feature type="domain" description="PRC barrel" evidence="1">
    <location>
        <begin position="103"/>
        <end position="182"/>
    </location>
</feature>
<comment type="function">
    <text evidence="1">An accessory protein needed during the final step in the assembly of 30S ribosomal subunit, possibly for assembly of the head region. Essential for efficient processing of 16S rRNA. May be needed both before and after RbfA during the maturation of 16S rRNA. It has affinity for free ribosomal 30S subunits but not for 70S ribosomes.</text>
</comment>
<comment type="subunit">
    <text evidence="1">Binds ribosomal protein uS19.</text>
</comment>
<comment type="subcellular location">
    <subcellularLocation>
        <location evidence="1">Cytoplasm</location>
    </subcellularLocation>
</comment>
<comment type="domain">
    <text evidence="1">The PRC barrel domain binds ribosomal protein uS19.</text>
</comment>
<comment type="similarity">
    <text evidence="1">Belongs to the RimM family.</text>
</comment>
<reference key="1">
    <citation type="journal article" date="2006" name="J. Bacteriol.">
        <title>Complete genome sequence of Yersinia pestis strains Antiqua and Nepal516: evidence of gene reduction in an emerging pathogen.</title>
        <authorList>
            <person name="Chain P.S.G."/>
            <person name="Hu P."/>
            <person name="Malfatti S.A."/>
            <person name="Radnedge L."/>
            <person name="Larimer F."/>
            <person name="Vergez L.M."/>
            <person name="Worsham P."/>
            <person name="Chu M.C."/>
            <person name="Andersen G.L."/>
        </authorList>
    </citation>
    <scope>NUCLEOTIDE SEQUENCE [LARGE SCALE GENOMIC DNA]</scope>
    <source>
        <strain>Antiqua</strain>
    </source>
</reference>
<accession>Q1C410</accession>
<name>RIMM_YERPA</name>
<dbReference type="EMBL" id="CP000308">
    <property type="protein sequence ID" value="ABG14812.1"/>
    <property type="molecule type" value="Genomic_DNA"/>
</dbReference>
<dbReference type="RefSeq" id="WP_002209459.1">
    <property type="nucleotide sequence ID" value="NZ_CP009906.1"/>
</dbReference>
<dbReference type="SMR" id="Q1C410"/>
<dbReference type="GeneID" id="57975423"/>
<dbReference type="KEGG" id="ypa:YPA_2850"/>
<dbReference type="Proteomes" id="UP000001971">
    <property type="component" value="Chromosome"/>
</dbReference>
<dbReference type="GO" id="GO:0005737">
    <property type="term" value="C:cytoplasm"/>
    <property type="evidence" value="ECO:0007669"/>
    <property type="project" value="UniProtKB-SubCell"/>
</dbReference>
<dbReference type="GO" id="GO:0005840">
    <property type="term" value="C:ribosome"/>
    <property type="evidence" value="ECO:0007669"/>
    <property type="project" value="InterPro"/>
</dbReference>
<dbReference type="GO" id="GO:0043022">
    <property type="term" value="F:ribosome binding"/>
    <property type="evidence" value="ECO:0007669"/>
    <property type="project" value="InterPro"/>
</dbReference>
<dbReference type="GO" id="GO:0042274">
    <property type="term" value="P:ribosomal small subunit biogenesis"/>
    <property type="evidence" value="ECO:0007669"/>
    <property type="project" value="UniProtKB-UniRule"/>
</dbReference>
<dbReference type="GO" id="GO:0006364">
    <property type="term" value="P:rRNA processing"/>
    <property type="evidence" value="ECO:0007669"/>
    <property type="project" value="UniProtKB-UniRule"/>
</dbReference>
<dbReference type="FunFam" id="2.30.30.240:FF:000001">
    <property type="entry name" value="Ribosome maturation factor RimM"/>
    <property type="match status" value="1"/>
</dbReference>
<dbReference type="FunFam" id="2.40.30.60:FF:000001">
    <property type="entry name" value="Ribosome maturation factor RimM"/>
    <property type="match status" value="1"/>
</dbReference>
<dbReference type="Gene3D" id="2.30.30.240">
    <property type="entry name" value="PRC-barrel domain"/>
    <property type="match status" value="1"/>
</dbReference>
<dbReference type="Gene3D" id="2.40.30.60">
    <property type="entry name" value="RimM"/>
    <property type="match status" value="1"/>
</dbReference>
<dbReference type="HAMAP" id="MF_00014">
    <property type="entry name" value="Ribosome_mat_RimM"/>
    <property type="match status" value="1"/>
</dbReference>
<dbReference type="InterPro" id="IPR011033">
    <property type="entry name" value="PRC_barrel-like_sf"/>
</dbReference>
<dbReference type="InterPro" id="IPR056792">
    <property type="entry name" value="PRC_RimM"/>
</dbReference>
<dbReference type="InterPro" id="IPR011961">
    <property type="entry name" value="RimM"/>
</dbReference>
<dbReference type="InterPro" id="IPR002676">
    <property type="entry name" value="RimM_N"/>
</dbReference>
<dbReference type="InterPro" id="IPR036976">
    <property type="entry name" value="RimM_N_sf"/>
</dbReference>
<dbReference type="InterPro" id="IPR009000">
    <property type="entry name" value="Transl_B-barrel_sf"/>
</dbReference>
<dbReference type="NCBIfam" id="TIGR02273">
    <property type="entry name" value="16S_RimM"/>
    <property type="match status" value="1"/>
</dbReference>
<dbReference type="PANTHER" id="PTHR33692">
    <property type="entry name" value="RIBOSOME MATURATION FACTOR RIMM"/>
    <property type="match status" value="1"/>
</dbReference>
<dbReference type="PANTHER" id="PTHR33692:SF1">
    <property type="entry name" value="RIBOSOME MATURATION FACTOR RIMM"/>
    <property type="match status" value="1"/>
</dbReference>
<dbReference type="Pfam" id="PF24986">
    <property type="entry name" value="PRC_RimM"/>
    <property type="match status" value="1"/>
</dbReference>
<dbReference type="Pfam" id="PF01782">
    <property type="entry name" value="RimM"/>
    <property type="match status" value="1"/>
</dbReference>
<dbReference type="SUPFAM" id="SSF50346">
    <property type="entry name" value="PRC-barrel domain"/>
    <property type="match status" value="1"/>
</dbReference>
<dbReference type="SUPFAM" id="SSF50447">
    <property type="entry name" value="Translation proteins"/>
    <property type="match status" value="1"/>
</dbReference>
<sequence length="182" mass="20754">MSKQLNPAVPDQPIVLGKMGSTYGIRGWLRVFSSTENAESIFDYQPWFIQQAGKWQHVELEDWKRHSQDLIIKVKGVDDREAANLLTNCEIIVDSTQLPALEEDDYYWKDLMGCQVVTTTGYELGKIIDMMETGSNDVMVVKANLKDAFGMKERLVPFLHGQVIKKVDLTAQRVEVDWDPGF</sequence>